<dbReference type="EMBL" id="CP000800">
    <property type="protein sequence ID" value="ABV18210.1"/>
    <property type="molecule type" value="Genomic_DNA"/>
</dbReference>
<dbReference type="RefSeq" id="WP_000520781.1">
    <property type="nucleotide sequence ID" value="NC_009801.1"/>
</dbReference>
<dbReference type="SMR" id="A7ZJU9"/>
<dbReference type="GeneID" id="86863397"/>
<dbReference type="KEGG" id="ecw:EcE24377A_0954"/>
<dbReference type="HOGENOM" id="CLU_134358_2_1_6"/>
<dbReference type="Proteomes" id="UP000001122">
    <property type="component" value="Chromosome"/>
</dbReference>
<dbReference type="GO" id="GO:0030163">
    <property type="term" value="P:protein catabolic process"/>
    <property type="evidence" value="ECO:0007669"/>
    <property type="project" value="InterPro"/>
</dbReference>
<dbReference type="GO" id="GO:0006508">
    <property type="term" value="P:proteolysis"/>
    <property type="evidence" value="ECO:0007669"/>
    <property type="project" value="UniProtKB-UniRule"/>
</dbReference>
<dbReference type="FunFam" id="3.30.1390.10:FF:000002">
    <property type="entry name" value="ATP-dependent Clp protease adapter protein ClpS"/>
    <property type="match status" value="1"/>
</dbReference>
<dbReference type="Gene3D" id="3.30.1390.10">
    <property type="match status" value="1"/>
</dbReference>
<dbReference type="HAMAP" id="MF_00302">
    <property type="entry name" value="ClpS"/>
    <property type="match status" value="1"/>
</dbReference>
<dbReference type="InterPro" id="IPR022935">
    <property type="entry name" value="ClpS"/>
</dbReference>
<dbReference type="InterPro" id="IPR003769">
    <property type="entry name" value="ClpS_core"/>
</dbReference>
<dbReference type="InterPro" id="IPR014719">
    <property type="entry name" value="Ribosomal_bL12_C/ClpS-like"/>
</dbReference>
<dbReference type="NCBIfam" id="NF000670">
    <property type="entry name" value="PRK00033.1-3"/>
    <property type="match status" value="1"/>
</dbReference>
<dbReference type="NCBIfam" id="NF000672">
    <property type="entry name" value="PRK00033.1-5"/>
    <property type="match status" value="1"/>
</dbReference>
<dbReference type="PANTHER" id="PTHR33473:SF19">
    <property type="entry name" value="ATP-DEPENDENT CLP PROTEASE ADAPTER PROTEIN CLPS"/>
    <property type="match status" value="1"/>
</dbReference>
<dbReference type="PANTHER" id="PTHR33473">
    <property type="entry name" value="ATP-DEPENDENT CLP PROTEASE ADAPTER PROTEIN CLPS1, CHLOROPLASTIC"/>
    <property type="match status" value="1"/>
</dbReference>
<dbReference type="Pfam" id="PF02617">
    <property type="entry name" value="ClpS"/>
    <property type="match status" value="1"/>
</dbReference>
<dbReference type="SUPFAM" id="SSF54736">
    <property type="entry name" value="ClpS-like"/>
    <property type="match status" value="1"/>
</dbReference>
<comment type="function">
    <text evidence="1">Involved in the modulation of the specificity of the ClpAP-mediated ATP-dependent protein degradation.</text>
</comment>
<comment type="subunit">
    <text evidence="1">Binds to the N-terminal domain of the chaperone ClpA.</text>
</comment>
<comment type="similarity">
    <text evidence="1">Belongs to the ClpS family.</text>
</comment>
<keyword id="KW-1185">Reference proteome</keyword>
<feature type="chain" id="PRO_1000059316" description="ATP-dependent Clp protease adapter protein ClpS">
    <location>
        <begin position="1"/>
        <end position="106"/>
    </location>
</feature>
<accession>A7ZJU9</accession>
<sequence>MGKTNDWLDFDQLAEEKVRDALKPPSMYKVILVNDDYTPMEFVIDVLQKFFSYDVERATQLMLAVHYQGKAICGVFTAEVAETKVAMVNKYARENEHPLLCTLEKA</sequence>
<protein>
    <recommendedName>
        <fullName evidence="1">ATP-dependent Clp protease adapter protein ClpS</fullName>
    </recommendedName>
</protein>
<organism>
    <name type="scientific">Escherichia coli O139:H28 (strain E24377A / ETEC)</name>
    <dbReference type="NCBI Taxonomy" id="331111"/>
    <lineage>
        <taxon>Bacteria</taxon>
        <taxon>Pseudomonadati</taxon>
        <taxon>Pseudomonadota</taxon>
        <taxon>Gammaproteobacteria</taxon>
        <taxon>Enterobacterales</taxon>
        <taxon>Enterobacteriaceae</taxon>
        <taxon>Escherichia</taxon>
    </lineage>
</organism>
<name>CLPS_ECO24</name>
<proteinExistence type="inferred from homology"/>
<gene>
    <name evidence="1" type="primary">clpS</name>
    <name type="ordered locus">EcE24377A_0954</name>
</gene>
<reference key="1">
    <citation type="journal article" date="2008" name="J. Bacteriol.">
        <title>The pangenome structure of Escherichia coli: comparative genomic analysis of E. coli commensal and pathogenic isolates.</title>
        <authorList>
            <person name="Rasko D.A."/>
            <person name="Rosovitz M.J."/>
            <person name="Myers G.S.A."/>
            <person name="Mongodin E.F."/>
            <person name="Fricke W.F."/>
            <person name="Gajer P."/>
            <person name="Crabtree J."/>
            <person name="Sebaihia M."/>
            <person name="Thomson N.R."/>
            <person name="Chaudhuri R."/>
            <person name="Henderson I.R."/>
            <person name="Sperandio V."/>
            <person name="Ravel J."/>
        </authorList>
    </citation>
    <scope>NUCLEOTIDE SEQUENCE [LARGE SCALE GENOMIC DNA]</scope>
    <source>
        <strain>E24377A / ETEC</strain>
    </source>
</reference>
<evidence type="ECO:0000255" key="1">
    <source>
        <dbReference type="HAMAP-Rule" id="MF_00302"/>
    </source>
</evidence>